<gene>
    <name type="ORF">An16g02940</name>
</gene>
<reference key="1">
    <citation type="journal article" date="2007" name="Nat. Biotechnol.">
        <title>Genome sequencing and analysis of the versatile cell factory Aspergillus niger CBS 513.88.</title>
        <authorList>
            <person name="Pel H.J."/>
            <person name="de Winde J.H."/>
            <person name="Archer D.B."/>
            <person name="Dyer P.S."/>
            <person name="Hofmann G."/>
            <person name="Schaap P.J."/>
            <person name="Turner G."/>
            <person name="de Vries R.P."/>
            <person name="Albang R."/>
            <person name="Albermann K."/>
            <person name="Andersen M.R."/>
            <person name="Bendtsen J.D."/>
            <person name="Benen J.A.E."/>
            <person name="van den Berg M."/>
            <person name="Breestraat S."/>
            <person name="Caddick M.X."/>
            <person name="Contreras R."/>
            <person name="Cornell M."/>
            <person name="Coutinho P.M."/>
            <person name="Danchin E.G.J."/>
            <person name="Debets A.J.M."/>
            <person name="Dekker P."/>
            <person name="van Dijck P.W.M."/>
            <person name="van Dijk A."/>
            <person name="Dijkhuizen L."/>
            <person name="Driessen A.J.M."/>
            <person name="d'Enfert C."/>
            <person name="Geysens S."/>
            <person name="Goosen C."/>
            <person name="Groot G.S.P."/>
            <person name="de Groot P.W.J."/>
            <person name="Guillemette T."/>
            <person name="Henrissat B."/>
            <person name="Herweijer M."/>
            <person name="van den Hombergh J.P.T.W."/>
            <person name="van den Hondel C.A.M.J.J."/>
            <person name="van der Heijden R.T.J.M."/>
            <person name="van der Kaaij R.M."/>
            <person name="Klis F.M."/>
            <person name="Kools H.J."/>
            <person name="Kubicek C.P."/>
            <person name="van Kuyk P.A."/>
            <person name="Lauber J."/>
            <person name="Lu X."/>
            <person name="van der Maarel M.J.E.C."/>
            <person name="Meulenberg R."/>
            <person name="Menke H."/>
            <person name="Mortimer M.A."/>
            <person name="Nielsen J."/>
            <person name="Oliver S.G."/>
            <person name="Olsthoorn M."/>
            <person name="Pal K."/>
            <person name="van Peij N.N.M.E."/>
            <person name="Ram A.F.J."/>
            <person name="Rinas U."/>
            <person name="Roubos J.A."/>
            <person name="Sagt C.M.J."/>
            <person name="Schmoll M."/>
            <person name="Sun J."/>
            <person name="Ussery D."/>
            <person name="Varga J."/>
            <person name="Vervecken W."/>
            <person name="van de Vondervoort P.J.J."/>
            <person name="Wedler H."/>
            <person name="Woesten H.A.B."/>
            <person name="Zeng A.-P."/>
            <person name="van Ooyen A.J.J."/>
            <person name="Visser J."/>
            <person name="Stam H."/>
        </authorList>
    </citation>
    <scope>NUCLEOTIDE SEQUENCE [LARGE SCALE GENOMIC DNA]</scope>
    <source>
        <strain>ATCC MYA-4892 / CBS 513.88 / FGSC A1513</strain>
    </source>
</reference>
<feature type="chain" id="PRO_0000365054" description="Eukaryotic translation initiation factor 3 subunit K">
    <location>
        <begin position="1"/>
        <end position="267"/>
    </location>
</feature>
<feature type="domain" description="PCI" evidence="2">
    <location>
        <begin position="46"/>
        <end position="233"/>
    </location>
</feature>
<name>EIF3K_ASPNC</name>
<comment type="function">
    <text evidence="1">Component of the eukaryotic translation initiation factor 3 (eIF-3) complex, which is involved in protein synthesis of a specialized repertoire of mRNAs and, together with other initiation factors, stimulates binding of mRNA and methionyl-tRNAi to the 40S ribosome. The eIF-3 complex specifically targets and initiates translation of a subset of mRNAs involved in cell proliferation.</text>
</comment>
<comment type="subunit">
    <text evidence="1">Component of the eukaryotic translation initiation factor 3 (eIF-3) complex.</text>
</comment>
<comment type="subcellular location">
    <subcellularLocation>
        <location evidence="1">Cytoplasm</location>
    </subcellularLocation>
</comment>
<comment type="similarity">
    <text evidence="1">Belongs to the eIF-3 subunit K family.</text>
</comment>
<keyword id="KW-0963">Cytoplasm</keyword>
<keyword id="KW-0396">Initiation factor</keyword>
<keyword id="KW-0648">Protein biosynthesis</keyword>
<keyword id="KW-1185">Reference proteome</keyword>
<sequence>MGVTFDKCETRPANIDAILNGLDRYNPETTTVFQDYVAQQCEDRTFDCYANLALLKLYQFNPHLLQAETVTNVLVKALTVFPSPAFSLCLALLPAHTQPFQASDAEAQAAAQTSDFVESIQKLARLSTLLESAQYTQFWSTLNSDDLYADLVADVAGFEELVRIRIAVEVGKTFREIPAEVLEQWLDLRSREALEKFVAEVCSWEVDKSGANTVIKVPTNKENEARSEVKSERVGVDMFGRVIRRGSSRLHERIDKRYPHRTQPFSF</sequence>
<evidence type="ECO:0000255" key="1">
    <source>
        <dbReference type="HAMAP-Rule" id="MF_03010"/>
    </source>
</evidence>
<evidence type="ECO:0000255" key="2">
    <source>
        <dbReference type="PROSITE-ProRule" id="PRU01185"/>
    </source>
</evidence>
<protein>
    <recommendedName>
        <fullName evidence="1">Eukaryotic translation initiation factor 3 subunit K</fullName>
        <shortName evidence="1">eIF3k</shortName>
    </recommendedName>
    <alternativeName>
        <fullName evidence="1">eIF-3 p25</fullName>
    </alternativeName>
</protein>
<organism>
    <name type="scientific">Aspergillus niger (strain ATCC MYA-4892 / CBS 513.88 / FGSC A1513)</name>
    <dbReference type="NCBI Taxonomy" id="425011"/>
    <lineage>
        <taxon>Eukaryota</taxon>
        <taxon>Fungi</taxon>
        <taxon>Dikarya</taxon>
        <taxon>Ascomycota</taxon>
        <taxon>Pezizomycotina</taxon>
        <taxon>Eurotiomycetes</taxon>
        <taxon>Eurotiomycetidae</taxon>
        <taxon>Eurotiales</taxon>
        <taxon>Aspergillaceae</taxon>
        <taxon>Aspergillus</taxon>
        <taxon>Aspergillus subgen. Circumdati</taxon>
    </lineage>
</organism>
<proteinExistence type="inferred from homology"/>
<accession>A2R7B4</accession>
<dbReference type="EMBL" id="AM270362">
    <property type="protein sequence ID" value="CAK48603.1"/>
    <property type="molecule type" value="Genomic_DNA"/>
</dbReference>
<dbReference type="RefSeq" id="XP_001397606.1">
    <property type="nucleotide sequence ID" value="XM_001397569.2"/>
</dbReference>
<dbReference type="SMR" id="A2R7B4"/>
<dbReference type="EnsemblFungi" id="CAK48603">
    <property type="protein sequence ID" value="CAK48603"/>
    <property type="gene ID" value="An16g02940"/>
</dbReference>
<dbReference type="GeneID" id="4988687"/>
<dbReference type="KEGG" id="ang:An16g02940"/>
<dbReference type="VEuPathDB" id="FungiDB:An16g02940"/>
<dbReference type="HOGENOM" id="CLU_076723_0_1_1"/>
<dbReference type="Proteomes" id="UP000006706">
    <property type="component" value="Chromosome 5R"/>
</dbReference>
<dbReference type="GO" id="GO:0016282">
    <property type="term" value="C:eukaryotic 43S preinitiation complex"/>
    <property type="evidence" value="ECO:0007669"/>
    <property type="project" value="UniProtKB-UniRule"/>
</dbReference>
<dbReference type="GO" id="GO:0033290">
    <property type="term" value="C:eukaryotic 48S preinitiation complex"/>
    <property type="evidence" value="ECO:0007669"/>
    <property type="project" value="UniProtKB-UniRule"/>
</dbReference>
<dbReference type="GO" id="GO:0005852">
    <property type="term" value="C:eukaryotic translation initiation factor 3 complex"/>
    <property type="evidence" value="ECO:0007669"/>
    <property type="project" value="UniProtKB-UniRule"/>
</dbReference>
<dbReference type="GO" id="GO:0043022">
    <property type="term" value="F:ribosome binding"/>
    <property type="evidence" value="ECO:0007669"/>
    <property type="project" value="InterPro"/>
</dbReference>
<dbReference type="GO" id="GO:0003723">
    <property type="term" value="F:RNA binding"/>
    <property type="evidence" value="ECO:0007669"/>
    <property type="project" value="UniProtKB-UniRule"/>
</dbReference>
<dbReference type="GO" id="GO:0003743">
    <property type="term" value="F:translation initiation factor activity"/>
    <property type="evidence" value="ECO:0007669"/>
    <property type="project" value="UniProtKB-UniRule"/>
</dbReference>
<dbReference type="GO" id="GO:0001732">
    <property type="term" value="P:formation of cytoplasmic translation initiation complex"/>
    <property type="evidence" value="ECO:0007669"/>
    <property type="project" value="UniProtKB-UniRule"/>
</dbReference>
<dbReference type="GO" id="GO:0006446">
    <property type="term" value="P:regulation of translational initiation"/>
    <property type="evidence" value="ECO:0007669"/>
    <property type="project" value="InterPro"/>
</dbReference>
<dbReference type="FunFam" id="1.10.10.10:FF:000389">
    <property type="entry name" value="Eukaryotic translation initiation factor 3 subunit K"/>
    <property type="match status" value="1"/>
</dbReference>
<dbReference type="FunFam" id="1.25.40.250:FF:000003">
    <property type="entry name" value="Eukaryotic translation initiation factor 3 subunit K"/>
    <property type="match status" value="1"/>
</dbReference>
<dbReference type="Gene3D" id="1.25.40.250">
    <property type="entry name" value="ARM repeat, domain 1"/>
    <property type="match status" value="1"/>
</dbReference>
<dbReference type="Gene3D" id="1.10.10.10">
    <property type="entry name" value="Winged helix-like DNA-binding domain superfamily/Winged helix DNA-binding domain"/>
    <property type="match status" value="1"/>
</dbReference>
<dbReference type="HAMAP" id="MF_03010">
    <property type="entry name" value="eIF3k"/>
    <property type="match status" value="1"/>
</dbReference>
<dbReference type="InterPro" id="IPR016024">
    <property type="entry name" value="ARM-type_fold"/>
</dbReference>
<dbReference type="InterPro" id="IPR033464">
    <property type="entry name" value="CSN8_PSD8_EIF3K"/>
</dbReference>
<dbReference type="InterPro" id="IPR009374">
    <property type="entry name" value="eIF3k"/>
</dbReference>
<dbReference type="InterPro" id="IPR000717">
    <property type="entry name" value="PCI_dom"/>
</dbReference>
<dbReference type="InterPro" id="IPR016020">
    <property type="entry name" value="Transl_init_fac_sub12_N_euk"/>
</dbReference>
<dbReference type="InterPro" id="IPR036388">
    <property type="entry name" value="WH-like_DNA-bd_sf"/>
</dbReference>
<dbReference type="InterPro" id="IPR036390">
    <property type="entry name" value="WH_DNA-bd_sf"/>
</dbReference>
<dbReference type="PANTHER" id="PTHR13022">
    <property type="entry name" value="EUKARYOTIC TRANSLATION INITIATION FACTOR 3 SUBUNIT 11"/>
    <property type="match status" value="1"/>
</dbReference>
<dbReference type="PANTHER" id="PTHR13022:SF0">
    <property type="entry name" value="EUKARYOTIC TRANSLATION INITIATION FACTOR 3 SUBUNIT K"/>
    <property type="match status" value="1"/>
</dbReference>
<dbReference type="Pfam" id="PF10075">
    <property type="entry name" value="CSN8_PSD8_EIF3K"/>
    <property type="match status" value="1"/>
</dbReference>
<dbReference type="SUPFAM" id="SSF48371">
    <property type="entry name" value="ARM repeat"/>
    <property type="match status" value="1"/>
</dbReference>
<dbReference type="SUPFAM" id="SSF46785">
    <property type="entry name" value="Winged helix' DNA-binding domain"/>
    <property type="match status" value="1"/>
</dbReference>
<dbReference type="PROSITE" id="PS50250">
    <property type="entry name" value="PCI"/>
    <property type="match status" value="1"/>
</dbReference>